<organism>
    <name type="scientific">Lysinibacillus sphaericus (strain C3-41)</name>
    <dbReference type="NCBI Taxonomy" id="444177"/>
    <lineage>
        <taxon>Bacteria</taxon>
        <taxon>Bacillati</taxon>
        <taxon>Bacillota</taxon>
        <taxon>Bacilli</taxon>
        <taxon>Bacillales</taxon>
        <taxon>Bacillaceae</taxon>
        <taxon>Lysinibacillus</taxon>
    </lineage>
</organism>
<gene>
    <name evidence="7" type="ordered locus">Bsph_0911</name>
</gene>
<name>LOX_LYSSC</name>
<proteinExistence type="evidence at protein level"/>
<keyword id="KW-0285">Flavoprotein</keyword>
<keyword id="KW-0288">FMN</keyword>
<keyword id="KW-0560">Oxidoreductase</keyword>
<feature type="chain" id="PRO_0000454873" description="L-lactate oxidase">
    <location>
        <begin position="1"/>
        <end position="386"/>
    </location>
</feature>
<feature type="domain" description="FMN hydroxy acid dehydrogenase" evidence="3">
    <location>
        <begin position="16"/>
        <end position="382"/>
    </location>
</feature>
<feature type="active site" description="Proton acceptor" evidence="2">
    <location>
        <position position="277"/>
    </location>
</feature>
<feature type="binding site" evidence="2">
    <location>
        <position position="42"/>
    </location>
    <ligand>
        <name>pyruvate</name>
        <dbReference type="ChEBI" id="CHEBI:15361"/>
    </ligand>
</feature>
<feature type="binding site" evidence="2">
    <location>
        <begin position="95"/>
        <end position="97"/>
    </location>
    <ligand>
        <name>FMN</name>
        <dbReference type="ChEBI" id="CHEBI:58210"/>
    </ligand>
</feature>
<feature type="binding site" evidence="2">
    <location>
        <position position="124"/>
    </location>
    <ligand>
        <name>FMN</name>
        <dbReference type="ChEBI" id="CHEBI:58210"/>
    </ligand>
</feature>
<feature type="binding site" evidence="2">
    <location>
        <position position="146"/>
    </location>
    <ligand>
        <name>FMN</name>
        <dbReference type="ChEBI" id="CHEBI:58210"/>
    </ligand>
</feature>
<feature type="binding site" evidence="2">
    <location>
        <position position="148"/>
    </location>
    <ligand>
        <name>pyruvate</name>
        <dbReference type="ChEBI" id="CHEBI:15361"/>
    </ligand>
</feature>
<feature type="binding site" evidence="2">
    <location>
        <position position="174"/>
    </location>
    <ligand>
        <name>FMN</name>
        <dbReference type="ChEBI" id="CHEBI:58210"/>
    </ligand>
</feature>
<feature type="binding site" evidence="2">
    <location>
        <position position="183"/>
    </location>
    <ligand>
        <name>pyruvate</name>
        <dbReference type="ChEBI" id="CHEBI:15361"/>
    </ligand>
</feature>
<feature type="binding site" evidence="2">
    <location>
        <position position="253"/>
    </location>
    <ligand>
        <name>FMN</name>
        <dbReference type="ChEBI" id="CHEBI:58210"/>
    </ligand>
</feature>
<feature type="binding site" evidence="2">
    <location>
        <position position="275"/>
    </location>
    <ligand>
        <name>FMN</name>
        <dbReference type="ChEBI" id="CHEBI:58210"/>
    </ligand>
</feature>
<feature type="binding site" evidence="2">
    <location>
        <position position="277"/>
    </location>
    <ligand>
        <name>pyruvate</name>
        <dbReference type="ChEBI" id="CHEBI:15361"/>
    </ligand>
</feature>
<feature type="binding site" evidence="2">
    <location>
        <position position="280"/>
    </location>
    <ligand>
        <name>pyruvate</name>
        <dbReference type="ChEBI" id="CHEBI:15361"/>
    </ligand>
</feature>
<feature type="binding site" evidence="2">
    <location>
        <begin position="308"/>
        <end position="312"/>
    </location>
    <ligand>
        <name>FMN</name>
        <dbReference type="ChEBI" id="CHEBI:58210"/>
    </ligand>
</feature>
<feature type="binding site" evidence="2">
    <location>
        <position position="332"/>
    </location>
    <ligand>
        <name>FMN</name>
        <dbReference type="ChEBI" id="CHEBI:58210"/>
    </ligand>
</feature>
<sequence>MTNTTDGDLLLKNITAQAPFPICFADLEKAVAEKIPAGPFGYIRSGAGGEQTLRNNRSAFEKYSIVPRFLNDVSNVHTSINLFGKTYPTPLLFAPVGMNGMVHEEGELAAVRAAQQLNMPYIQSTVSTYALEDVAEAAPSATKWFQLYWSTNEEIAFSMAARAESAGFEAIVLTVDTVMLGWREEDVRNQFSPLKLGYAKGNYINDPVFMASLPNDSFESYVQGVLQNVFHPTLNWEHVRELKRRTNLPILLKGILHPEDAKLAIVNGVDGIIVSNHGGRQLDGVIGSLDALPSIVSAVKGQIPIILDSGVYRGMDALKALALGADAVAIGRPFIYGLALEGQQGVERVMTNIYDELKVSIALAGTTSIEGLRTITLVKNDGMEVK</sequence>
<evidence type="ECO:0000250" key="1">
    <source>
        <dbReference type="UniProtKB" id="O33655"/>
    </source>
</evidence>
<evidence type="ECO:0000250" key="2">
    <source>
        <dbReference type="UniProtKB" id="Q44467"/>
    </source>
</evidence>
<evidence type="ECO:0000255" key="3">
    <source>
        <dbReference type="PROSITE-ProRule" id="PRU00683"/>
    </source>
</evidence>
<evidence type="ECO:0000269" key="4">
    <source>
    </source>
</evidence>
<evidence type="ECO:0000305" key="5"/>
<evidence type="ECO:0000305" key="6">
    <source>
    </source>
</evidence>
<evidence type="ECO:0000312" key="7">
    <source>
        <dbReference type="EMBL" id="ACA38525.1"/>
    </source>
</evidence>
<dbReference type="EC" id="1.1.3.-" evidence="4"/>
<dbReference type="EC" id="1.1.3.15" evidence="4"/>
<dbReference type="EMBL" id="CP000817">
    <property type="protein sequence ID" value="ACA38525.1"/>
    <property type="molecule type" value="Genomic_DNA"/>
</dbReference>
<dbReference type="RefSeq" id="WP_012292672.1">
    <property type="nucleotide sequence ID" value="NC_010382.1"/>
</dbReference>
<dbReference type="SMR" id="B1HZY7"/>
<dbReference type="EnsemblBacteria" id="ACA38525">
    <property type="protein sequence ID" value="ACA38525"/>
    <property type="gene ID" value="Bsph_0911"/>
</dbReference>
<dbReference type="KEGG" id="lsp:Bsph_0911"/>
<dbReference type="HOGENOM" id="CLU_020639_6_1_9"/>
<dbReference type="Proteomes" id="UP000002164">
    <property type="component" value="Chromosome"/>
</dbReference>
<dbReference type="GO" id="GO:0003973">
    <property type="term" value="F:(S)-2-hydroxy-acid oxidase activity"/>
    <property type="evidence" value="ECO:0007669"/>
    <property type="project" value="UniProtKB-EC"/>
</dbReference>
<dbReference type="GO" id="GO:0010181">
    <property type="term" value="F:FMN binding"/>
    <property type="evidence" value="ECO:0007669"/>
    <property type="project" value="InterPro"/>
</dbReference>
<dbReference type="FunFam" id="3.20.20.70:FF:000029">
    <property type="entry name" value="L-lactate dehydrogenase"/>
    <property type="match status" value="1"/>
</dbReference>
<dbReference type="Gene3D" id="3.20.20.70">
    <property type="entry name" value="Aldolase class I"/>
    <property type="match status" value="1"/>
</dbReference>
<dbReference type="InterPro" id="IPR013785">
    <property type="entry name" value="Aldolase_TIM"/>
</dbReference>
<dbReference type="InterPro" id="IPR012133">
    <property type="entry name" value="Alpha-hydoxy_acid_DH_FMN"/>
</dbReference>
<dbReference type="InterPro" id="IPR000262">
    <property type="entry name" value="FMN-dep_DH"/>
</dbReference>
<dbReference type="InterPro" id="IPR037396">
    <property type="entry name" value="FMN_HAD"/>
</dbReference>
<dbReference type="InterPro" id="IPR008259">
    <property type="entry name" value="FMN_hydac_DH_AS"/>
</dbReference>
<dbReference type="PANTHER" id="PTHR10578:SF143">
    <property type="entry name" value="FMN-DEPENDENT ALPHA-HYDROXY ACID DEHYDROGENASE PB1A11.03"/>
    <property type="match status" value="1"/>
</dbReference>
<dbReference type="PANTHER" id="PTHR10578">
    <property type="entry name" value="S -2-HYDROXY-ACID OXIDASE-RELATED"/>
    <property type="match status" value="1"/>
</dbReference>
<dbReference type="Pfam" id="PF01070">
    <property type="entry name" value="FMN_dh"/>
    <property type="match status" value="1"/>
</dbReference>
<dbReference type="PIRSF" id="PIRSF000138">
    <property type="entry name" value="Al-hdrx_acd_dh"/>
    <property type="match status" value="1"/>
</dbReference>
<dbReference type="SUPFAM" id="SSF51395">
    <property type="entry name" value="FMN-linked oxidoreductases"/>
    <property type="match status" value="1"/>
</dbReference>
<dbReference type="PROSITE" id="PS00557">
    <property type="entry name" value="FMN_HYDROXY_ACID_DH_1"/>
    <property type="match status" value="1"/>
</dbReference>
<dbReference type="PROSITE" id="PS51349">
    <property type="entry name" value="FMN_HYDROXY_ACID_DH_2"/>
    <property type="match status" value="1"/>
</dbReference>
<protein>
    <recommendedName>
        <fullName evidence="5">L-lactate oxidase</fullName>
        <shortName evidence="5">LOX</shortName>
        <ecNumber evidence="4">1.1.3.-</ecNumber>
    </recommendedName>
    <alternativeName>
        <fullName evidence="6">(S)-2-hydroxy-acid oxidase</fullName>
        <ecNumber evidence="4">1.1.3.15</ecNumber>
    </alternativeName>
</protein>
<reference key="1">
    <citation type="journal article" date="2008" name="J. Bacteriol.">
        <title>Complete genome sequence of the mosquitocidal bacterium Bacillus sphaericus C3-41 and comparison with those of closely related Bacillus species.</title>
        <authorList>
            <person name="Hu X."/>
            <person name="Fan W."/>
            <person name="Han B."/>
            <person name="Liu H."/>
            <person name="Zheng D."/>
            <person name="Li Q."/>
            <person name="Dong W."/>
            <person name="Yan J."/>
            <person name="Gao M."/>
            <person name="Berry C."/>
            <person name="Yuan Z."/>
        </authorList>
    </citation>
    <scope>NUCLEOTIDE SEQUENCE [LARGE SCALE GENOMIC DNA]</scope>
    <source>
        <strain>C3-41</strain>
    </source>
</reference>
<reference key="2">
    <citation type="journal article" date="2021" name="PLoS Comput. Biol.">
        <title>Experimental and computational investigation of enzyme functional annotations uncovers misannotation in the EC 1.1.3.15 enzyme class.</title>
        <authorList>
            <person name="Rembeza E."/>
            <person name="Engqvist M.K.M."/>
        </authorList>
    </citation>
    <scope>FUNCTION</scope>
    <scope>CATALYTIC ACTIVITY</scope>
</reference>
<comment type="function">
    <text evidence="1 4">Oxidase that catalyzes the oxidation of a broad range of 2-hydroxyacids in vitro, such as (S)-lactate, 2-hydroxyoctanoate, mandelate, 2-hydroxyoctadecanoate and (S)-2-hydroxyglutarate, to the corresponding 2-oxoacids, with a reduction of O2 to H2O2 (PubMed:34555022). May be involved in the utilization of L-lactate as an energy source for growth (By similarity).</text>
</comment>
<comment type="catalytic activity">
    <reaction evidence="4">
        <text>a (2S)-2-hydroxycarboxylate + O2 = a 2-oxocarboxylate + H2O2</text>
        <dbReference type="Rhea" id="RHEA:16789"/>
        <dbReference type="ChEBI" id="CHEBI:15379"/>
        <dbReference type="ChEBI" id="CHEBI:16240"/>
        <dbReference type="ChEBI" id="CHEBI:35179"/>
        <dbReference type="ChEBI" id="CHEBI:58123"/>
        <dbReference type="EC" id="1.1.3.15"/>
    </reaction>
</comment>
<comment type="catalytic activity">
    <reaction evidence="4">
        <text>(S)-lactate + O2 = pyruvate + H2O2</text>
        <dbReference type="Rhea" id="RHEA:55868"/>
        <dbReference type="ChEBI" id="CHEBI:15361"/>
        <dbReference type="ChEBI" id="CHEBI:15379"/>
        <dbReference type="ChEBI" id="CHEBI:16240"/>
        <dbReference type="ChEBI" id="CHEBI:16651"/>
    </reaction>
    <physiologicalReaction direction="left-to-right" evidence="5">
        <dbReference type="Rhea" id="RHEA:55869"/>
    </physiologicalReaction>
</comment>
<comment type="catalytic activity">
    <reaction evidence="4">
        <text>2-hydroxyoctanoate + O2 = 2-oxooctanoate + H2O2</text>
        <dbReference type="Rhea" id="RHEA:67940"/>
        <dbReference type="ChEBI" id="CHEBI:15379"/>
        <dbReference type="ChEBI" id="CHEBI:16240"/>
        <dbReference type="ChEBI" id="CHEBI:133514"/>
        <dbReference type="ChEBI" id="CHEBI:176689"/>
    </reaction>
</comment>
<comment type="catalytic activity">
    <reaction evidence="4">
        <text>mandelate + O2 = phenylglyoxylate + H2O2</text>
        <dbReference type="Rhea" id="RHEA:68968"/>
        <dbReference type="ChEBI" id="CHEBI:15379"/>
        <dbReference type="ChEBI" id="CHEBI:16240"/>
        <dbReference type="ChEBI" id="CHEBI:25147"/>
        <dbReference type="ChEBI" id="CHEBI:36656"/>
    </reaction>
</comment>
<comment type="catalytic activity">
    <reaction evidence="4">
        <text>2-hydroxyoctadecanoate + O2 = 2-oxooctadecanoate + H2O2</text>
        <dbReference type="Rhea" id="RHEA:68964"/>
        <dbReference type="ChEBI" id="CHEBI:15379"/>
        <dbReference type="ChEBI" id="CHEBI:16240"/>
        <dbReference type="ChEBI" id="CHEBI:17162"/>
        <dbReference type="ChEBI" id="CHEBI:76724"/>
    </reaction>
</comment>
<comment type="catalytic activity">
    <reaction evidence="4">
        <text>(S)-2-hydroxyglutarate + O2 = H2O2 + 2-oxoglutarate</text>
        <dbReference type="Rhea" id="RHEA:27662"/>
        <dbReference type="ChEBI" id="CHEBI:15379"/>
        <dbReference type="ChEBI" id="CHEBI:16240"/>
        <dbReference type="ChEBI" id="CHEBI:16782"/>
        <dbReference type="ChEBI" id="CHEBI:16810"/>
    </reaction>
</comment>
<comment type="cofactor">
    <cofactor evidence="2">
        <name>FMN</name>
        <dbReference type="ChEBI" id="CHEBI:58210"/>
    </cofactor>
    <text evidence="2">Binds 1 FMN per subunit.</text>
</comment>
<comment type="subunit">
    <text evidence="2">Homotetramer.</text>
</comment>
<comment type="similarity">
    <text evidence="5">Belongs to the FMN-dependent alpha-hydroxy acid dehydrogenase family.</text>
</comment>
<accession>B1HZY7</accession>